<gene>
    <name evidence="1" type="primary">thrB</name>
    <name type="ordered locus">HP_1050</name>
</gene>
<proteinExistence type="inferred from homology"/>
<reference key="1">
    <citation type="journal article" date="1997" name="Nature">
        <title>The complete genome sequence of the gastric pathogen Helicobacter pylori.</title>
        <authorList>
            <person name="Tomb J.-F."/>
            <person name="White O."/>
            <person name="Kerlavage A.R."/>
            <person name="Clayton R.A."/>
            <person name="Sutton G.G."/>
            <person name="Fleischmann R.D."/>
            <person name="Ketchum K.A."/>
            <person name="Klenk H.-P."/>
            <person name="Gill S.R."/>
            <person name="Dougherty B.A."/>
            <person name="Nelson K.E."/>
            <person name="Quackenbush J."/>
            <person name="Zhou L."/>
            <person name="Kirkness E.F."/>
            <person name="Peterson S.N."/>
            <person name="Loftus B.J."/>
            <person name="Richardson D.L."/>
            <person name="Dodson R.J."/>
            <person name="Khalak H.G."/>
            <person name="Glodek A."/>
            <person name="McKenney K."/>
            <person name="FitzGerald L.M."/>
            <person name="Lee N."/>
            <person name="Adams M.D."/>
            <person name="Hickey E.K."/>
            <person name="Berg D.E."/>
            <person name="Gocayne J.D."/>
            <person name="Utterback T.R."/>
            <person name="Peterson J.D."/>
            <person name="Kelley J.M."/>
            <person name="Cotton M.D."/>
            <person name="Weidman J.F."/>
            <person name="Fujii C."/>
            <person name="Bowman C."/>
            <person name="Watthey L."/>
            <person name="Wallin E."/>
            <person name="Hayes W.S."/>
            <person name="Borodovsky M."/>
            <person name="Karp P.D."/>
            <person name="Smith H.O."/>
            <person name="Fraser C.M."/>
            <person name="Venter J.C."/>
        </authorList>
    </citation>
    <scope>NUCLEOTIDE SEQUENCE [LARGE SCALE GENOMIC DNA]</scope>
    <source>
        <strain>ATCC 700392 / 26695</strain>
    </source>
</reference>
<accession>O25690</accession>
<comment type="function">
    <text evidence="1">Catalyzes the ATP-dependent phosphorylation of L-homoserine to L-homoserine phosphate.</text>
</comment>
<comment type="catalytic activity">
    <reaction evidence="1">
        <text>L-homoserine + ATP = O-phospho-L-homoserine + ADP + H(+)</text>
        <dbReference type="Rhea" id="RHEA:13985"/>
        <dbReference type="ChEBI" id="CHEBI:15378"/>
        <dbReference type="ChEBI" id="CHEBI:30616"/>
        <dbReference type="ChEBI" id="CHEBI:57476"/>
        <dbReference type="ChEBI" id="CHEBI:57590"/>
        <dbReference type="ChEBI" id="CHEBI:456216"/>
        <dbReference type="EC" id="2.7.1.39"/>
    </reaction>
</comment>
<comment type="pathway">
    <text evidence="1">Amino-acid biosynthesis; L-threonine biosynthesis; L-threonine from L-aspartate: step 4/5.</text>
</comment>
<comment type="subcellular location">
    <subcellularLocation>
        <location evidence="1">Cytoplasm</location>
    </subcellularLocation>
</comment>
<comment type="similarity">
    <text evidence="1">Belongs to the GHMP kinase family. Homoserine kinase subfamily.</text>
</comment>
<organism>
    <name type="scientific">Helicobacter pylori (strain ATCC 700392 / 26695)</name>
    <name type="common">Campylobacter pylori</name>
    <dbReference type="NCBI Taxonomy" id="85962"/>
    <lineage>
        <taxon>Bacteria</taxon>
        <taxon>Pseudomonadati</taxon>
        <taxon>Campylobacterota</taxon>
        <taxon>Epsilonproteobacteria</taxon>
        <taxon>Campylobacterales</taxon>
        <taxon>Helicobacteraceae</taxon>
        <taxon>Helicobacter</taxon>
    </lineage>
</organism>
<feature type="chain" id="PRO_0000156576" description="Homoserine kinase">
    <location>
        <begin position="1"/>
        <end position="293"/>
    </location>
</feature>
<feature type="binding site" evidence="1">
    <location>
        <begin position="83"/>
        <end position="93"/>
    </location>
    <ligand>
        <name>ATP</name>
        <dbReference type="ChEBI" id="CHEBI:30616"/>
    </ligand>
</feature>
<keyword id="KW-0028">Amino-acid biosynthesis</keyword>
<keyword id="KW-0067">ATP-binding</keyword>
<keyword id="KW-0963">Cytoplasm</keyword>
<keyword id="KW-0418">Kinase</keyword>
<keyword id="KW-0547">Nucleotide-binding</keyword>
<keyword id="KW-1185">Reference proteome</keyword>
<keyword id="KW-0791">Threonine biosynthesis</keyword>
<keyword id="KW-0808">Transferase</keyword>
<name>KHSE_HELPY</name>
<protein>
    <recommendedName>
        <fullName evidence="1">Homoserine kinase</fullName>
        <shortName evidence="1">HK</shortName>
        <shortName evidence="1">HSK</shortName>
        <ecNumber evidence="1">2.7.1.39</ecNumber>
    </recommendedName>
</protein>
<sequence>MVVSVPATSANLGPGFDCLGLSLNLRNRFFIEPSSFHAVKLVGEGEGIPKFLTNNIFTKVFYEILKKHGNDGSFKFLLHNKVPITRGMGSSSAMIVGAVASAFAFLGFDFDRENIVNTALIYENHPDNITPAVFGGYNAAFVEKKKVISLKTKIPSFLKAVMVIPNRAISTKQSRHLLPKRYSVQESVFNLSHASLMTMAIVQGKWDLLRCCSKDRMHQYKRMQTYPVLFAIQKIALENNALMSTLSGSGSSFFNMCYEEDAPKLKQVLSKKFPKFRVAVLDFDNDGVLIEKD</sequence>
<dbReference type="EC" id="2.7.1.39" evidence="1"/>
<dbReference type="EMBL" id="AE000511">
    <property type="protein sequence ID" value="AAD08095.1"/>
    <property type="molecule type" value="Genomic_DNA"/>
</dbReference>
<dbReference type="PIR" id="B64651">
    <property type="entry name" value="B64651"/>
</dbReference>
<dbReference type="RefSeq" id="NP_207841.1">
    <property type="nucleotide sequence ID" value="NC_000915.1"/>
</dbReference>
<dbReference type="RefSeq" id="WP_000261726.1">
    <property type="nucleotide sequence ID" value="NC_018939.1"/>
</dbReference>
<dbReference type="SMR" id="O25690"/>
<dbReference type="DIP" id="DIP-3182N"/>
<dbReference type="FunCoup" id="O25690">
    <property type="interactions" value="273"/>
</dbReference>
<dbReference type="IntAct" id="O25690">
    <property type="interactions" value="1"/>
</dbReference>
<dbReference type="MINT" id="O25690"/>
<dbReference type="STRING" id="85962.HP_1050"/>
<dbReference type="PaxDb" id="85962-C694_05430"/>
<dbReference type="EnsemblBacteria" id="AAD08095">
    <property type="protein sequence ID" value="AAD08095"/>
    <property type="gene ID" value="HP_1050"/>
</dbReference>
<dbReference type="KEGG" id="heo:C694_05430"/>
<dbReference type="KEGG" id="hpy:HP_1050"/>
<dbReference type="PATRIC" id="fig|85962.47.peg.1129"/>
<dbReference type="eggNOG" id="COG0083">
    <property type="taxonomic scope" value="Bacteria"/>
</dbReference>
<dbReference type="InParanoid" id="O25690"/>
<dbReference type="OrthoDB" id="9769912at2"/>
<dbReference type="PhylomeDB" id="O25690"/>
<dbReference type="UniPathway" id="UPA00050">
    <property type="reaction ID" value="UER00064"/>
</dbReference>
<dbReference type="Proteomes" id="UP000000429">
    <property type="component" value="Chromosome"/>
</dbReference>
<dbReference type="GO" id="GO:0005737">
    <property type="term" value="C:cytoplasm"/>
    <property type="evidence" value="ECO:0007669"/>
    <property type="project" value="UniProtKB-SubCell"/>
</dbReference>
<dbReference type="GO" id="GO:0005524">
    <property type="term" value="F:ATP binding"/>
    <property type="evidence" value="ECO:0007669"/>
    <property type="project" value="UniProtKB-UniRule"/>
</dbReference>
<dbReference type="GO" id="GO:0004413">
    <property type="term" value="F:homoserine kinase activity"/>
    <property type="evidence" value="ECO:0007669"/>
    <property type="project" value="UniProtKB-UniRule"/>
</dbReference>
<dbReference type="GO" id="GO:0009088">
    <property type="term" value="P:threonine biosynthetic process"/>
    <property type="evidence" value="ECO:0007669"/>
    <property type="project" value="UniProtKB-UniRule"/>
</dbReference>
<dbReference type="Gene3D" id="3.30.230.10">
    <property type="match status" value="1"/>
</dbReference>
<dbReference type="Gene3D" id="3.30.70.890">
    <property type="entry name" value="GHMP kinase, C-terminal domain"/>
    <property type="match status" value="1"/>
</dbReference>
<dbReference type="HAMAP" id="MF_00384">
    <property type="entry name" value="Homoser_kinase"/>
    <property type="match status" value="1"/>
</dbReference>
<dbReference type="InterPro" id="IPR013750">
    <property type="entry name" value="GHMP_kinase_C_dom"/>
</dbReference>
<dbReference type="InterPro" id="IPR036554">
    <property type="entry name" value="GHMP_kinase_C_sf"/>
</dbReference>
<dbReference type="InterPro" id="IPR006204">
    <property type="entry name" value="GHMP_kinase_N_dom"/>
</dbReference>
<dbReference type="InterPro" id="IPR006203">
    <property type="entry name" value="GHMP_knse_ATP-bd_CS"/>
</dbReference>
<dbReference type="InterPro" id="IPR000870">
    <property type="entry name" value="Homoserine_kinase"/>
</dbReference>
<dbReference type="InterPro" id="IPR020568">
    <property type="entry name" value="Ribosomal_Su5_D2-typ_SF"/>
</dbReference>
<dbReference type="InterPro" id="IPR014721">
    <property type="entry name" value="Ribsml_uS5_D2-typ_fold_subgr"/>
</dbReference>
<dbReference type="NCBIfam" id="TIGR00191">
    <property type="entry name" value="thrB"/>
    <property type="match status" value="1"/>
</dbReference>
<dbReference type="PANTHER" id="PTHR20861:SF1">
    <property type="entry name" value="HOMOSERINE KINASE"/>
    <property type="match status" value="1"/>
</dbReference>
<dbReference type="PANTHER" id="PTHR20861">
    <property type="entry name" value="HOMOSERINE/4-DIPHOSPHOCYTIDYL-2-C-METHYL-D-ERYTHRITOL KINASE"/>
    <property type="match status" value="1"/>
</dbReference>
<dbReference type="Pfam" id="PF08544">
    <property type="entry name" value="GHMP_kinases_C"/>
    <property type="match status" value="1"/>
</dbReference>
<dbReference type="Pfam" id="PF00288">
    <property type="entry name" value="GHMP_kinases_N"/>
    <property type="match status" value="1"/>
</dbReference>
<dbReference type="PIRSF" id="PIRSF000676">
    <property type="entry name" value="Homoser_kin"/>
    <property type="match status" value="1"/>
</dbReference>
<dbReference type="PRINTS" id="PR00958">
    <property type="entry name" value="HOMSERKINASE"/>
</dbReference>
<dbReference type="SUPFAM" id="SSF55060">
    <property type="entry name" value="GHMP Kinase, C-terminal domain"/>
    <property type="match status" value="1"/>
</dbReference>
<dbReference type="SUPFAM" id="SSF54211">
    <property type="entry name" value="Ribosomal protein S5 domain 2-like"/>
    <property type="match status" value="1"/>
</dbReference>
<dbReference type="PROSITE" id="PS00627">
    <property type="entry name" value="GHMP_KINASES_ATP"/>
    <property type="match status" value="1"/>
</dbReference>
<evidence type="ECO:0000255" key="1">
    <source>
        <dbReference type="HAMAP-Rule" id="MF_00384"/>
    </source>
</evidence>